<organism>
    <name type="scientific">Burkholderia mallei (strain NCTC 10229)</name>
    <dbReference type="NCBI Taxonomy" id="412022"/>
    <lineage>
        <taxon>Bacteria</taxon>
        <taxon>Pseudomonadati</taxon>
        <taxon>Pseudomonadota</taxon>
        <taxon>Betaproteobacteria</taxon>
        <taxon>Burkholderiales</taxon>
        <taxon>Burkholderiaceae</taxon>
        <taxon>Burkholderia</taxon>
        <taxon>pseudomallei group</taxon>
    </lineage>
</organism>
<dbReference type="EC" id="6.2.1.1" evidence="1"/>
<dbReference type="EMBL" id="CP000545">
    <property type="protein sequence ID" value="ABM99776.2"/>
    <property type="molecule type" value="Genomic_DNA"/>
</dbReference>
<dbReference type="SMR" id="A2RYW5"/>
<dbReference type="KEGG" id="bml:BMA10229_1080"/>
<dbReference type="HOGENOM" id="CLU_000022_3_6_4"/>
<dbReference type="Proteomes" id="UP000002283">
    <property type="component" value="Chromosome II"/>
</dbReference>
<dbReference type="GO" id="GO:0005829">
    <property type="term" value="C:cytosol"/>
    <property type="evidence" value="ECO:0007669"/>
    <property type="project" value="TreeGrafter"/>
</dbReference>
<dbReference type="GO" id="GO:0003987">
    <property type="term" value="F:acetate-CoA ligase activity"/>
    <property type="evidence" value="ECO:0007669"/>
    <property type="project" value="UniProtKB-UniRule"/>
</dbReference>
<dbReference type="GO" id="GO:0016208">
    <property type="term" value="F:AMP binding"/>
    <property type="evidence" value="ECO:0007669"/>
    <property type="project" value="InterPro"/>
</dbReference>
<dbReference type="GO" id="GO:0005524">
    <property type="term" value="F:ATP binding"/>
    <property type="evidence" value="ECO:0007669"/>
    <property type="project" value="UniProtKB-KW"/>
</dbReference>
<dbReference type="GO" id="GO:0046872">
    <property type="term" value="F:metal ion binding"/>
    <property type="evidence" value="ECO:0007669"/>
    <property type="project" value="UniProtKB-KW"/>
</dbReference>
<dbReference type="GO" id="GO:0019427">
    <property type="term" value="P:acetyl-CoA biosynthetic process from acetate"/>
    <property type="evidence" value="ECO:0007669"/>
    <property type="project" value="InterPro"/>
</dbReference>
<dbReference type="CDD" id="cd05966">
    <property type="entry name" value="ACS"/>
    <property type="match status" value="1"/>
</dbReference>
<dbReference type="FunFam" id="3.40.50.12780:FF:000001">
    <property type="entry name" value="Acetyl-coenzyme A synthetase"/>
    <property type="match status" value="1"/>
</dbReference>
<dbReference type="Gene3D" id="3.30.300.30">
    <property type="match status" value="1"/>
</dbReference>
<dbReference type="Gene3D" id="3.40.50.12780">
    <property type="entry name" value="N-terminal domain of ligase-like"/>
    <property type="match status" value="1"/>
</dbReference>
<dbReference type="HAMAP" id="MF_01123">
    <property type="entry name" value="Ac_CoA_synth"/>
    <property type="match status" value="1"/>
</dbReference>
<dbReference type="InterPro" id="IPR011904">
    <property type="entry name" value="Ac_CoA_lig"/>
</dbReference>
<dbReference type="InterPro" id="IPR032387">
    <property type="entry name" value="ACAS_N"/>
</dbReference>
<dbReference type="InterPro" id="IPR025110">
    <property type="entry name" value="AMP-bd_C"/>
</dbReference>
<dbReference type="InterPro" id="IPR045851">
    <property type="entry name" value="AMP-bd_C_sf"/>
</dbReference>
<dbReference type="InterPro" id="IPR020845">
    <property type="entry name" value="AMP-binding_CS"/>
</dbReference>
<dbReference type="InterPro" id="IPR000873">
    <property type="entry name" value="AMP-dep_synth/lig_dom"/>
</dbReference>
<dbReference type="InterPro" id="IPR042099">
    <property type="entry name" value="ANL_N_sf"/>
</dbReference>
<dbReference type="NCBIfam" id="TIGR02188">
    <property type="entry name" value="Ac_CoA_lig_AcsA"/>
    <property type="match status" value="1"/>
</dbReference>
<dbReference type="NCBIfam" id="NF001208">
    <property type="entry name" value="PRK00174.1"/>
    <property type="match status" value="1"/>
</dbReference>
<dbReference type="PANTHER" id="PTHR24095">
    <property type="entry name" value="ACETYL-COENZYME A SYNTHETASE"/>
    <property type="match status" value="1"/>
</dbReference>
<dbReference type="PANTHER" id="PTHR24095:SF14">
    <property type="entry name" value="ACETYL-COENZYME A SYNTHETASE 1"/>
    <property type="match status" value="1"/>
</dbReference>
<dbReference type="Pfam" id="PF16177">
    <property type="entry name" value="ACAS_N"/>
    <property type="match status" value="1"/>
</dbReference>
<dbReference type="Pfam" id="PF00501">
    <property type="entry name" value="AMP-binding"/>
    <property type="match status" value="1"/>
</dbReference>
<dbReference type="Pfam" id="PF13193">
    <property type="entry name" value="AMP-binding_C"/>
    <property type="match status" value="1"/>
</dbReference>
<dbReference type="SUPFAM" id="SSF56801">
    <property type="entry name" value="Acetyl-CoA synthetase-like"/>
    <property type="match status" value="1"/>
</dbReference>
<dbReference type="PROSITE" id="PS00455">
    <property type="entry name" value="AMP_BINDING"/>
    <property type="match status" value="1"/>
</dbReference>
<protein>
    <recommendedName>
        <fullName evidence="1">Acetyl-coenzyme A synthetase</fullName>
        <shortName evidence="1">AcCoA synthetase</shortName>
        <shortName evidence="1">Acs</shortName>
        <ecNumber evidence="1">6.2.1.1</ecNumber>
    </recommendedName>
    <alternativeName>
        <fullName evidence="1">Acetate--CoA ligase</fullName>
    </alternativeName>
    <alternativeName>
        <fullName evidence="1">Acyl-activating enzyme</fullName>
    </alternativeName>
</protein>
<evidence type="ECO:0000255" key="1">
    <source>
        <dbReference type="HAMAP-Rule" id="MF_01123"/>
    </source>
</evidence>
<reference key="1">
    <citation type="journal article" date="2010" name="Genome Biol. Evol.">
        <title>Continuing evolution of Burkholderia mallei through genome reduction and large-scale rearrangements.</title>
        <authorList>
            <person name="Losada L."/>
            <person name="Ronning C.M."/>
            <person name="DeShazer D."/>
            <person name="Woods D."/>
            <person name="Fedorova N."/>
            <person name="Kim H.S."/>
            <person name="Shabalina S.A."/>
            <person name="Pearson T.R."/>
            <person name="Brinkac L."/>
            <person name="Tan P."/>
            <person name="Nandi T."/>
            <person name="Crabtree J."/>
            <person name="Badger J."/>
            <person name="Beckstrom-Sternberg S."/>
            <person name="Saqib M."/>
            <person name="Schutzer S.E."/>
            <person name="Keim P."/>
            <person name="Nierman W.C."/>
        </authorList>
    </citation>
    <scope>NUCLEOTIDE SEQUENCE [LARGE SCALE GENOMIC DNA]</scope>
    <source>
        <strain>NCTC 10229</strain>
    </source>
</reference>
<reference key="2">
    <citation type="submission" date="2009-10" db="EMBL/GenBank/DDBJ databases">
        <authorList>
            <person name="Brinkac L.M."/>
            <person name="Harkins D.M."/>
            <person name="Shrivastava S."/>
            <person name="Durkin A.S."/>
            <person name="Sutton G."/>
        </authorList>
    </citation>
    <scope>SEQUENCE REVISION</scope>
</reference>
<sequence>MSAIESVLHERRQFAPPAAVEKAAAISGMAAYRALAEEAERDYEGFWARLARETLEWRKPFGKVLDETNAPFYKWFEDGELNASYNCLDRHVAAGLGERVAVIFEADDGTVTRVTYADLLARVSRFANALKKRGVGRGDRVVIYIPMSVEGIVAMQACARIGATHSVVFGGFSSKSLHERIVDVGATALVTADEQMRGGKTLPLKSIADEALAMGGCDAVKTVVVYRRTGGNVDWHAGRDVWMHEMVANESDACEPEWVGAEHPLFILYTSGSTGKPKGVQHSTAGYLLWVAQTMKWTFDWKPDDVFWCTADIGWVTGHSYITYGPLAVGATQVVFEGVPTYPNAGRFWKMIGDHKVTVFYTAPTAIRSLIKAAEADDRVHPRSYDLSSLRIIGTVGEPINPEAWIWYHKNVGQARCPIVDTWWQTETGGHMITPLPGATPTVPGSCTLPLPGIMAAVVDETGQDVPNGQGGILVVKRPWPAMARTIWGDPERFKKSYFPEELGGRLYLAGDGTVRDKETGYFTIMGRIDDVLNVSGHRLGTMEIESALVSHELVAEAAVVGRPDDTTGEAVVAFVVLKRSRPEGEEAAALAKTLRDWVGKEIGPIAKPKDIRFGDNLPKTRSGKIMRRLLRSLAKGEAITQDTSTLENPAILEQLAEVR</sequence>
<keyword id="KW-0007">Acetylation</keyword>
<keyword id="KW-0067">ATP-binding</keyword>
<keyword id="KW-0436">Ligase</keyword>
<keyword id="KW-0460">Magnesium</keyword>
<keyword id="KW-0479">Metal-binding</keyword>
<keyword id="KW-0547">Nucleotide-binding</keyword>
<comment type="function">
    <text evidence="1">Catalyzes the conversion of acetate into acetyl-CoA (AcCoA), an essential intermediate at the junction of anabolic and catabolic pathways. AcsA undergoes a two-step reaction. In the first half reaction, AcsA combines acetate with ATP to form acetyl-adenylate (AcAMP) intermediate. In the second half reaction, it can then transfer the acetyl group from AcAMP to the sulfhydryl group of CoA, forming the product AcCoA.</text>
</comment>
<comment type="catalytic activity">
    <reaction evidence="1">
        <text>acetate + ATP + CoA = acetyl-CoA + AMP + diphosphate</text>
        <dbReference type="Rhea" id="RHEA:23176"/>
        <dbReference type="ChEBI" id="CHEBI:30089"/>
        <dbReference type="ChEBI" id="CHEBI:30616"/>
        <dbReference type="ChEBI" id="CHEBI:33019"/>
        <dbReference type="ChEBI" id="CHEBI:57287"/>
        <dbReference type="ChEBI" id="CHEBI:57288"/>
        <dbReference type="ChEBI" id="CHEBI:456215"/>
        <dbReference type="EC" id="6.2.1.1"/>
    </reaction>
</comment>
<comment type="cofactor">
    <cofactor evidence="1">
        <name>Mg(2+)</name>
        <dbReference type="ChEBI" id="CHEBI:18420"/>
    </cofactor>
</comment>
<comment type="PTM">
    <text evidence="1">Acetylated. Deacetylation by the SIR2-homolog deacetylase activates the enzyme.</text>
</comment>
<comment type="similarity">
    <text evidence="1">Belongs to the ATP-dependent AMP-binding enzyme family.</text>
</comment>
<proteinExistence type="inferred from homology"/>
<name>ACSA_BURM9</name>
<accession>A2RYW5</accession>
<accession>A2RYW4</accession>
<gene>
    <name evidence="1" type="primary">acsA</name>
    <name type="ordered locus">BMA10229_1080</name>
</gene>
<feature type="chain" id="PRO_1000065278" description="Acetyl-coenzyme A synthetase">
    <location>
        <begin position="1"/>
        <end position="660"/>
    </location>
</feature>
<feature type="binding site" evidence="1">
    <location>
        <begin position="197"/>
        <end position="200"/>
    </location>
    <ligand>
        <name>CoA</name>
        <dbReference type="ChEBI" id="CHEBI:57287"/>
    </ligand>
</feature>
<feature type="binding site" evidence="1">
    <location>
        <position position="317"/>
    </location>
    <ligand>
        <name>CoA</name>
        <dbReference type="ChEBI" id="CHEBI:57287"/>
    </ligand>
</feature>
<feature type="binding site" evidence="1">
    <location>
        <begin position="397"/>
        <end position="399"/>
    </location>
    <ligand>
        <name>ATP</name>
        <dbReference type="ChEBI" id="CHEBI:30616"/>
    </ligand>
</feature>
<feature type="binding site" evidence="1">
    <location>
        <begin position="421"/>
        <end position="426"/>
    </location>
    <ligand>
        <name>ATP</name>
        <dbReference type="ChEBI" id="CHEBI:30616"/>
    </ligand>
</feature>
<feature type="binding site" evidence="1">
    <location>
        <position position="512"/>
    </location>
    <ligand>
        <name>ATP</name>
        <dbReference type="ChEBI" id="CHEBI:30616"/>
    </ligand>
</feature>
<feature type="binding site" evidence="1">
    <location>
        <position position="528"/>
    </location>
    <ligand>
        <name>ATP</name>
        <dbReference type="ChEBI" id="CHEBI:30616"/>
    </ligand>
</feature>
<feature type="binding site" evidence="1">
    <location>
        <position position="536"/>
    </location>
    <ligand>
        <name>CoA</name>
        <dbReference type="ChEBI" id="CHEBI:57287"/>
    </ligand>
</feature>
<feature type="binding site" evidence="1">
    <location>
        <position position="539"/>
    </location>
    <ligand>
        <name>ATP</name>
        <dbReference type="ChEBI" id="CHEBI:30616"/>
    </ligand>
</feature>
<feature type="binding site" evidence="1">
    <location>
        <position position="550"/>
    </location>
    <ligand>
        <name>Mg(2+)</name>
        <dbReference type="ChEBI" id="CHEBI:18420"/>
    </ligand>
</feature>
<feature type="binding site" evidence="1">
    <location>
        <position position="552"/>
    </location>
    <ligand>
        <name>Mg(2+)</name>
        <dbReference type="ChEBI" id="CHEBI:18420"/>
    </ligand>
</feature>
<feature type="binding site" evidence="1">
    <location>
        <position position="555"/>
    </location>
    <ligand>
        <name>Mg(2+)</name>
        <dbReference type="ChEBI" id="CHEBI:18420"/>
    </ligand>
</feature>
<feature type="modified residue" description="N6-acetyllysine" evidence="1">
    <location>
        <position position="625"/>
    </location>
</feature>